<comment type="function">
    <text evidence="1">DNA-dependent RNA polymerase catalyzes the transcription of DNA into RNA using the four ribonucleoside triphosphates as substrates.</text>
</comment>
<comment type="catalytic activity">
    <reaction evidence="1">
        <text>RNA(n) + a ribonucleoside 5'-triphosphate = RNA(n+1) + diphosphate</text>
        <dbReference type="Rhea" id="RHEA:21248"/>
        <dbReference type="Rhea" id="RHEA-COMP:14527"/>
        <dbReference type="Rhea" id="RHEA-COMP:17342"/>
        <dbReference type="ChEBI" id="CHEBI:33019"/>
        <dbReference type="ChEBI" id="CHEBI:61557"/>
        <dbReference type="ChEBI" id="CHEBI:140395"/>
        <dbReference type="EC" id="2.7.7.6"/>
    </reaction>
</comment>
<comment type="cofactor">
    <cofactor evidence="1">
        <name>Zn(2+)</name>
        <dbReference type="ChEBI" id="CHEBI:29105"/>
    </cofactor>
    <text evidence="1">Binds 1 Zn(2+) ion per subunit.</text>
</comment>
<comment type="subunit">
    <text evidence="1">In plastids the minimal PEP RNA polymerase catalytic core is composed of four subunits: alpha, beta, beta', and beta''. When a (nuclear-encoded) sigma factor is associated with the core the holoenzyme is formed, which can initiate transcription.</text>
</comment>
<comment type="subcellular location">
    <subcellularLocation>
        <location evidence="1">Plastid</location>
        <location evidence="1">Chloroplast</location>
    </subcellularLocation>
</comment>
<comment type="similarity">
    <text evidence="1">Belongs to the RNA polymerase beta' chain family. RpoC2 subfamily.</text>
</comment>
<sequence>MNLNFSLACETQASSFYGGFRPFIKYPSLQHSPGSVKEGDNKGANRSLKKATPWLRVSLERPYKYRTTLNARPVFFNRCFDKGRFKSLILWCILNFGEQKTVELVEQLKDIGYHQATLAGVSLGIDDLKIPNSKAQLVAEAQLENQLILQEDLRGNVTSIEKFQRLIDTWHLTSETLKDNVIKAFRNTDILNPVYMMAFSGARGNVSQVRQLVGMRGLMADPQGQIINFPIQSNFREGLTLTEYVISCYGARKGVVDTALRTATSGYLTRRLVDVAQHVIVYQFDCQTTRGILLNTIKVGNTTSISLQKRLVGRVSAEDIYNSKTNTKEVSRNQEITPILAEQISQNHNQVLVRSALTCQAKHGVCQLCYGWSLAQGSLVSLGEAVGVVAAQSIGEPGTQLTMRTFHTGGVFSGDVMEQIQAPHNGIVEFQTALQGTLIRTSHGKIAFLTYTKGELTLKNTTKAQRGLNHHLSSSLTQTVVGETKIIFPSYTILYVRNGEAVKHKQFIAEYSSLVGENQSIKSSQKVNAEMTGEVFFENVFLRVESSEESEKTYRSFKFSDIWILSCVTNTLKFKSNFSLTKPGDRINTATVINQVLLKKTDEGVATQQQSKKALSLPLNTSMEVLGEANKVDFSSKKTCKGLLQTDYKNLGYFYSFQNKLTKKAKSFDHSTSHLSRKGTVSLVQKNNTKSVNELFFKYGKPNLSGGSDLFKGSTSKGSPEGATGSLPVSSLNKDPFVTWYSSLFKAKYSGFYTPSTAPFTDTRMSQPAFRLAKKTANKKPPTLPCKYWGKGSFLLRNLSEVELFSNRNPGVFKRLESMTGLLSQQVYQDCYANQKILLTPFSPNTLQHSSPNTPKGVLRDGKSVVGRSNPPQHFHGSVGGGCPSKQVSAGPKKGLRAKHSEACFAIDFGETKTKTITKGRYVSQLNCKKEKRLLAKTSRMFSTLKVEFWLFENLTLSLVTHQHFPQYSYRSVEGPPTGMLGLWLLNNSFVLKQLVTNLETVASVGLPFGVVLNQNTNQNLNGSELLSQSLLNSSKKVEGPGRSASSGVLRAGSVGVDWLYFSSANTYLGKVSSGFENNKTQLIKSGQGVKQNFDQSLISQETILLASALKQLSNKQKTWPSLAFYNTLTFKNNNELGQSQLFNTGELDNNASNKSSVFSTGKSLLCHNPVLSKICNTTTFITPFNIKDRGVAPTELQLKQENKCIATQSSFLCNPTNLTPKVFLTTNYPGKVACSCVGGDVGKDTFVKVNLSQFDFIESNQSRFVPTLSFTSTLNRVNAVQQISLTKPHIYQKFFLSAQRGSYHLKTKKTLQGSPGLSYSGISNYSVSHHRSKKAESHTLPLRLNYAVKKVSRVDEERIPLRKKPKTDITKVFSIPELDWNVKLRLPSINSPETQGKNKAGVSYLVKLDLGVQRPQTAVSGRVDIFQRGLGDSEKALGFKGVAPHSSEKLNVPVFNQTNIFGLADSDASVKAGAVFETSKYTGEILKSIESKQQRLFNTPLGVVEKGLQLQNGQTHLSQLETKTIPSSLSPDSTQISPTQRVLTSDDQKTFNVLGKKPLVKVGDFVRYGDFLTCDKKISVSEPGLVIKITSSKITIRIAKPVLVSSGGVFHVQHGDFIEENAPLVTLTYTRLKTGDIVQGIPKIEELFEARISGTLHNQLAIIFENYKQKFSSAYAARKSLERIQQIIVENVLNVYQSQGVTIADKHVEIIVRQMTSKVRILESGRSGLLRGELVTLESVENANKSIHGQKAEYAPVLVGITKAALDIDKSFISAASFQETTRILSRAAIERKTDFLRGLKENVILGQLIPAGTGFSVSFSPEDPNHSKKVVKLVNQYLFSSDNLTSSTFSHMSRSSH</sequence>
<gene>
    <name evidence="1" type="primary">rpoC2</name>
</gene>
<evidence type="ECO:0000255" key="1">
    <source>
        <dbReference type="HAMAP-Rule" id="MF_01324"/>
    </source>
</evidence>
<protein>
    <recommendedName>
        <fullName evidence="1">DNA-directed RNA polymerase subunit beta''</fullName>
        <ecNumber evidence="1">2.7.7.6</ecNumber>
    </recommendedName>
    <alternativeName>
        <fullName evidence="1">PEP</fullName>
    </alternativeName>
    <alternativeName>
        <fullName evidence="1">Plastid-encoded RNA polymerase subunit beta''</fullName>
        <shortName evidence="1">RNA polymerase subunit beta''</shortName>
    </alternativeName>
</protein>
<proteinExistence type="inferred from homology"/>
<feature type="chain" id="PRO_0000353579" description="DNA-directed RNA polymerase subunit beta''">
    <location>
        <begin position="1"/>
        <end position="1859"/>
    </location>
</feature>
<feature type="binding site" evidence="1">
    <location>
        <position position="286"/>
    </location>
    <ligand>
        <name>Zn(2+)</name>
        <dbReference type="ChEBI" id="CHEBI:29105"/>
    </ligand>
</feature>
<feature type="binding site" evidence="1">
    <location>
        <position position="359"/>
    </location>
    <ligand>
        <name>Zn(2+)</name>
        <dbReference type="ChEBI" id="CHEBI:29105"/>
    </ligand>
</feature>
<feature type="binding site" evidence="1">
    <location>
        <position position="366"/>
    </location>
    <ligand>
        <name>Zn(2+)</name>
        <dbReference type="ChEBI" id="CHEBI:29105"/>
    </ligand>
</feature>
<feature type="binding site" evidence="1">
    <location>
        <position position="369"/>
    </location>
    <ligand>
        <name>Zn(2+)</name>
        <dbReference type="ChEBI" id="CHEBI:29105"/>
    </ligand>
</feature>
<organism>
    <name type="scientific">Oltmannsiellopsis viridis</name>
    <name type="common">Marine flagellate</name>
    <name type="synonym">Oltmannsiella viridis</name>
    <dbReference type="NCBI Taxonomy" id="51324"/>
    <lineage>
        <taxon>Eukaryota</taxon>
        <taxon>Viridiplantae</taxon>
        <taxon>Chlorophyta</taxon>
        <taxon>Ulvophyceae</taxon>
        <taxon>Oltmannsiellopsidales</taxon>
        <taxon>Oltmannsiellopsidaceae</taxon>
        <taxon>Oltmannsiellopsis</taxon>
    </lineage>
</organism>
<reference key="1">
    <citation type="journal article" date="2006" name="BMC Biol.">
        <title>The complete chloroplast DNA sequence of the green alga Oltmannsiellopsis viridis reveals a distinctive quadripartite architecture in the chloroplast genome of early diverging ulvophytes.</title>
        <authorList>
            <person name="Pombert J.-F."/>
            <person name="Lemieux C."/>
            <person name="Turmel M."/>
        </authorList>
    </citation>
    <scope>NUCLEOTIDE SEQUENCE [LARGE SCALE GENOMIC DNA]</scope>
</reference>
<dbReference type="EC" id="2.7.7.6" evidence="1"/>
<dbReference type="EMBL" id="DQ291132">
    <property type="protein sequence ID" value="ABB81940.1"/>
    <property type="molecule type" value="Genomic_DNA"/>
</dbReference>
<dbReference type="RefSeq" id="YP_635872.1">
    <property type="nucleotide sequence ID" value="NC_008099.1"/>
</dbReference>
<dbReference type="GeneID" id="4100143"/>
<dbReference type="GO" id="GO:0009507">
    <property type="term" value="C:chloroplast"/>
    <property type="evidence" value="ECO:0007669"/>
    <property type="project" value="UniProtKB-SubCell"/>
</dbReference>
<dbReference type="GO" id="GO:0000428">
    <property type="term" value="C:DNA-directed RNA polymerase complex"/>
    <property type="evidence" value="ECO:0007669"/>
    <property type="project" value="UniProtKB-KW"/>
</dbReference>
<dbReference type="GO" id="GO:0005739">
    <property type="term" value="C:mitochondrion"/>
    <property type="evidence" value="ECO:0007669"/>
    <property type="project" value="GOC"/>
</dbReference>
<dbReference type="GO" id="GO:0003677">
    <property type="term" value="F:DNA binding"/>
    <property type="evidence" value="ECO:0007669"/>
    <property type="project" value="UniProtKB-UniRule"/>
</dbReference>
<dbReference type="GO" id="GO:0003899">
    <property type="term" value="F:DNA-directed RNA polymerase activity"/>
    <property type="evidence" value="ECO:0007669"/>
    <property type="project" value="UniProtKB-UniRule"/>
</dbReference>
<dbReference type="GO" id="GO:0008270">
    <property type="term" value="F:zinc ion binding"/>
    <property type="evidence" value="ECO:0007669"/>
    <property type="project" value="UniProtKB-UniRule"/>
</dbReference>
<dbReference type="GO" id="GO:0006351">
    <property type="term" value="P:DNA-templated transcription"/>
    <property type="evidence" value="ECO:0007669"/>
    <property type="project" value="UniProtKB-UniRule"/>
</dbReference>
<dbReference type="CDD" id="cd02655">
    <property type="entry name" value="RNAP_beta'_C"/>
    <property type="match status" value="1"/>
</dbReference>
<dbReference type="Gene3D" id="1.10.132.30">
    <property type="match status" value="1"/>
</dbReference>
<dbReference type="Gene3D" id="1.10.150.390">
    <property type="match status" value="1"/>
</dbReference>
<dbReference type="Gene3D" id="1.10.1790.20">
    <property type="match status" value="1"/>
</dbReference>
<dbReference type="Gene3D" id="1.10.274.100">
    <property type="entry name" value="RNA polymerase Rpb1, domain 3"/>
    <property type="match status" value="1"/>
</dbReference>
<dbReference type="HAMAP" id="MF_01324">
    <property type="entry name" value="RNApol_bact_RpoC2"/>
    <property type="match status" value="1"/>
</dbReference>
<dbReference type="InterPro" id="IPR012756">
    <property type="entry name" value="DNA-dir_RpoC2_beta_pp"/>
</dbReference>
<dbReference type="InterPro" id="IPR045867">
    <property type="entry name" value="DNA-dir_RpoC_beta_prime"/>
</dbReference>
<dbReference type="InterPro" id="IPR042102">
    <property type="entry name" value="RNA_pol_Rpb1_3_sf"/>
</dbReference>
<dbReference type="InterPro" id="IPR007083">
    <property type="entry name" value="RNA_pol_Rpb1_4"/>
</dbReference>
<dbReference type="InterPro" id="IPR007081">
    <property type="entry name" value="RNA_pol_Rpb1_5"/>
</dbReference>
<dbReference type="InterPro" id="IPR038120">
    <property type="entry name" value="Rpb1_funnel_sf"/>
</dbReference>
<dbReference type="NCBIfam" id="TIGR02388">
    <property type="entry name" value="rpoC2_cyan"/>
    <property type="match status" value="1"/>
</dbReference>
<dbReference type="PANTHER" id="PTHR19376">
    <property type="entry name" value="DNA-DIRECTED RNA POLYMERASE"/>
    <property type="match status" value="1"/>
</dbReference>
<dbReference type="PANTHER" id="PTHR19376:SF68">
    <property type="entry name" value="DNA-DIRECTED RNA POLYMERASE SUBUNIT BETA"/>
    <property type="match status" value="1"/>
</dbReference>
<dbReference type="Pfam" id="PF05000">
    <property type="entry name" value="RNA_pol_Rpb1_4"/>
    <property type="match status" value="1"/>
</dbReference>
<dbReference type="Pfam" id="PF04998">
    <property type="entry name" value="RNA_pol_Rpb1_5"/>
    <property type="match status" value="2"/>
</dbReference>
<dbReference type="SUPFAM" id="SSF64484">
    <property type="entry name" value="beta and beta-prime subunits of DNA dependent RNA-polymerase"/>
    <property type="match status" value="1"/>
</dbReference>
<accession>Q20EX3</accession>
<geneLocation type="chloroplast"/>
<name>RPOC2_OLTVI</name>
<keyword id="KW-0150">Chloroplast</keyword>
<keyword id="KW-0240">DNA-directed RNA polymerase</keyword>
<keyword id="KW-0479">Metal-binding</keyword>
<keyword id="KW-0548">Nucleotidyltransferase</keyword>
<keyword id="KW-0934">Plastid</keyword>
<keyword id="KW-0804">Transcription</keyword>
<keyword id="KW-0808">Transferase</keyword>
<keyword id="KW-0862">Zinc</keyword>